<accession>A9IR85</accession>
<proteinExistence type="inferred from homology"/>
<keyword id="KW-0687">Ribonucleoprotein</keyword>
<keyword id="KW-0689">Ribosomal protein</keyword>
<keyword id="KW-0694">RNA-binding</keyword>
<keyword id="KW-0699">rRNA-binding</keyword>
<name>RL25_BART1</name>
<feature type="chain" id="PRO_1000086617" description="Large ribosomal subunit protein bL25">
    <location>
        <begin position="1"/>
        <end position="209"/>
    </location>
</feature>
<feature type="region of interest" description="Disordered" evidence="2">
    <location>
        <begin position="1"/>
        <end position="20"/>
    </location>
</feature>
<feature type="region of interest" description="Disordered" evidence="2">
    <location>
        <begin position="190"/>
        <end position="209"/>
    </location>
</feature>
<feature type="compositionally biased region" description="Basic and acidic residues" evidence="2">
    <location>
        <begin position="8"/>
        <end position="20"/>
    </location>
</feature>
<feature type="compositionally biased region" description="Acidic residues" evidence="2">
    <location>
        <begin position="192"/>
        <end position="209"/>
    </location>
</feature>
<comment type="function">
    <text evidence="1">This is one of the proteins that binds to the 5S RNA in the ribosome where it forms part of the central protuberance.</text>
</comment>
<comment type="subunit">
    <text evidence="1">Part of the 50S ribosomal subunit; part of the 5S rRNA/L5/L18/L25 subcomplex. Contacts the 5S rRNA. Binds to the 5S rRNA independently of L5 and L18.</text>
</comment>
<comment type="similarity">
    <text evidence="1">Belongs to the bacterial ribosomal protein bL25 family. CTC subfamily.</text>
</comment>
<evidence type="ECO:0000255" key="1">
    <source>
        <dbReference type="HAMAP-Rule" id="MF_01334"/>
    </source>
</evidence>
<evidence type="ECO:0000256" key="2">
    <source>
        <dbReference type="SAM" id="MobiDB-lite"/>
    </source>
</evidence>
<evidence type="ECO:0000305" key="3"/>
<organism>
    <name type="scientific">Bartonella tribocorum (strain CIP 105476 / IBS 506)</name>
    <dbReference type="NCBI Taxonomy" id="382640"/>
    <lineage>
        <taxon>Bacteria</taxon>
        <taxon>Pseudomonadati</taxon>
        <taxon>Pseudomonadota</taxon>
        <taxon>Alphaproteobacteria</taxon>
        <taxon>Hyphomicrobiales</taxon>
        <taxon>Bartonellaceae</taxon>
        <taxon>Bartonella</taxon>
    </lineage>
</organism>
<gene>
    <name evidence="1" type="primary">rplY</name>
    <name evidence="1" type="synonym">ctc</name>
    <name type="ordered locus">BT_0726</name>
</gene>
<protein>
    <recommendedName>
        <fullName evidence="1">Large ribosomal subunit protein bL25</fullName>
    </recommendedName>
    <alternativeName>
        <fullName evidence="3">50S ribosomal protein L25</fullName>
    </alternativeName>
    <alternativeName>
        <fullName evidence="1">General stress protein CTC</fullName>
    </alternativeName>
</protein>
<dbReference type="EMBL" id="AM260525">
    <property type="protein sequence ID" value="CAK01150.1"/>
    <property type="molecule type" value="Genomic_DNA"/>
</dbReference>
<dbReference type="RefSeq" id="WP_012231263.1">
    <property type="nucleotide sequence ID" value="NC_010161.1"/>
</dbReference>
<dbReference type="SMR" id="A9IR85"/>
<dbReference type="KEGG" id="btr:BT_0726"/>
<dbReference type="eggNOG" id="COG1825">
    <property type="taxonomic scope" value="Bacteria"/>
</dbReference>
<dbReference type="HOGENOM" id="CLU_075939_0_0_5"/>
<dbReference type="Proteomes" id="UP000001592">
    <property type="component" value="Chromosome"/>
</dbReference>
<dbReference type="GO" id="GO:0022625">
    <property type="term" value="C:cytosolic large ribosomal subunit"/>
    <property type="evidence" value="ECO:0007669"/>
    <property type="project" value="TreeGrafter"/>
</dbReference>
<dbReference type="GO" id="GO:0008097">
    <property type="term" value="F:5S rRNA binding"/>
    <property type="evidence" value="ECO:0007669"/>
    <property type="project" value="InterPro"/>
</dbReference>
<dbReference type="GO" id="GO:0003735">
    <property type="term" value="F:structural constituent of ribosome"/>
    <property type="evidence" value="ECO:0007669"/>
    <property type="project" value="InterPro"/>
</dbReference>
<dbReference type="GO" id="GO:0006412">
    <property type="term" value="P:translation"/>
    <property type="evidence" value="ECO:0007669"/>
    <property type="project" value="UniProtKB-UniRule"/>
</dbReference>
<dbReference type="CDD" id="cd00495">
    <property type="entry name" value="Ribosomal_L25_TL5_CTC"/>
    <property type="match status" value="1"/>
</dbReference>
<dbReference type="Gene3D" id="2.170.120.20">
    <property type="entry name" value="Ribosomal protein L25, beta domain"/>
    <property type="match status" value="1"/>
</dbReference>
<dbReference type="Gene3D" id="2.40.240.10">
    <property type="entry name" value="Ribosomal Protein L25, Chain P"/>
    <property type="match status" value="1"/>
</dbReference>
<dbReference type="HAMAP" id="MF_01334">
    <property type="entry name" value="Ribosomal_bL25_CTC"/>
    <property type="match status" value="1"/>
</dbReference>
<dbReference type="InterPro" id="IPR020056">
    <property type="entry name" value="Rbsml_bL25/Gln-tRNA_synth_N"/>
</dbReference>
<dbReference type="InterPro" id="IPR011035">
    <property type="entry name" value="Ribosomal_bL25/Gln-tRNA_synth"/>
</dbReference>
<dbReference type="InterPro" id="IPR020057">
    <property type="entry name" value="Ribosomal_bL25_b-dom"/>
</dbReference>
<dbReference type="InterPro" id="IPR037121">
    <property type="entry name" value="Ribosomal_bL25_C"/>
</dbReference>
<dbReference type="InterPro" id="IPR001021">
    <property type="entry name" value="Ribosomal_bL25_long"/>
</dbReference>
<dbReference type="InterPro" id="IPR029751">
    <property type="entry name" value="Ribosomal_L25_dom"/>
</dbReference>
<dbReference type="InterPro" id="IPR020930">
    <property type="entry name" value="Ribosomal_uL5_bac-type"/>
</dbReference>
<dbReference type="NCBIfam" id="TIGR00731">
    <property type="entry name" value="bL25_bact_ctc"/>
    <property type="match status" value="1"/>
</dbReference>
<dbReference type="NCBIfam" id="NF004128">
    <property type="entry name" value="PRK05618.1-2"/>
    <property type="match status" value="1"/>
</dbReference>
<dbReference type="NCBIfam" id="NF004612">
    <property type="entry name" value="PRK05943.1"/>
    <property type="match status" value="1"/>
</dbReference>
<dbReference type="PANTHER" id="PTHR33284">
    <property type="entry name" value="RIBOSOMAL PROTEIN L25/GLN-TRNA SYNTHETASE, ANTI-CODON-BINDING DOMAIN-CONTAINING PROTEIN"/>
    <property type="match status" value="1"/>
</dbReference>
<dbReference type="PANTHER" id="PTHR33284:SF1">
    <property type="entry name" value="RIBOSOMAL PROTEIN L25_GLN-TRNA SYNTHETASE, ANTI-CODON-BINDING DOMAIN-CONTAINING PROTEIN"/>
    <property type="match status" value="1"/>
</dbReference>
<dbReference type="Pfam" id="PF01386">
    <property type="entry name" value="Ribosomal_L25p"/>
    <property type="match status" value="1"/>
</dbReference>
<dbReference type="Pfam" id="PF14693">
    <property type="entry name" value="Ribosomal_TL5_C"/>
    <property type="match status" value="1"/>
</dbReference>
<dbReference type="SUPFAM" id="SSF50715">
    <property type="entry name" value="Ribosomal protein L25-like"/>
    <property type="match status" value="1"/>
</dbReference>
<sequence length="209" mass="23078">MSKSYTLKAEKRERVGKGSSRELRRNGLIPAVIYGEKQPPLAITVPYKEIFYKIHAGGFRTTIATIVLDKQKIMVLPKDYQLDPVRDFPLHVDFLRISAKSVVEVNIPVHFLNEDTAPGLKKGGVLNIVRHEIECTAPANAIPEAIEIDLSSYSIGDSIHISAVQLPKDVTPIIQDRDFTIATIAAPASLDVSDETSEQEKDEGETQTS</sequence>
<reference key="1">
    <citation type="journal article" date="2007" name="Nat. Genet.">
        <title>Genomic analysis of Bartonella identifies type IV secretion systems as host adaptability factors.</title>
        <authorList>
            <person name="Saenz H.L."/>
            <person name="Engel P."/>
            <person name="Stoeckli M.C."/>
            <person name="Lanz C."/>
            <person name="Raddatz G."/>
            <person name="Vayssier-Taussat M."/>
            <person name="Birtles R."/>
            <person name="Schuster S.C."/>
            <person name="Dehio C."/>
        </authorList>
    </citation>
    <scope>NUCLEOTIDE SEQUENCE [LARGE SCALE GENOMIC DNA]</scope>
    <source>
        <strain>CIP 105476 / IBS 506</strain>
    </source>
</reference>